<protein>
    <recommendedName>
        <fullName evidence="1">Ribosome maturation factor RimP</fullName>
    </recommendedName>
</protein>
<gene>
    <name evidence="1" type="primary">rimP</name>
    <name type="ordered locus">OB1594</name>
</gene>
<name>RIMP_OCEIH</name>
<accession>Q8EQU5</accession>
<dbReference type="EMBL" id="BA000028">
    <property type="protein sequence ID" value="BAC13550.1"/>
    <property type="molecule type" value="Genomic_DNA"/>
</dbReference>
<dbReference type="RefSeq" id="WP_011065994.1">
    <property type="nucleotide sequence ID" value="NC_004193.1"/>
</dbReference>
<dbReference type="SMR" id="Q8EQU5"/>
<dbReference type="STRING" id="221109.gene:10733834"/>
<dbReference type="KEGG" id="oih:OB1594"/>
<dbReference type="eggNOG" id="COG0779">
    <property type="taxonomic scope" value="Bacteria"/>
</dbReference>
<dbReference type="HOGENOM" id="CLU_070525_2_0_9"/>
<dbReference type="OrthoDB" id="9805006at2"/>
<dbReference type="PhylomeDB" id="Q8EQU5"/>
<dbReference type="Proteomes" id="UP000000822">
    <property type="component" value="Chromosome"/>
</dbReference>
<dbReference type="GO" id="GO:0005829">
    <property type="term" value="C:cytosol"/>
    <property type="evidence" value="ECO:0007669"/>
    <property type="project" value="TreeGrafter"/>
</dbReference>
<dbReference type="GO" id="GO:0000028">
    <property type="term" value="P:ribosomal small subunit assembly"/>
    <property type="evidence" value="ECO:0007669"/>
    <property type="project" value="TreeGrafter"/>
</dbReference>
<dbReference type="GO" id="GO:0006412">
    <property type="term" value="P:translation"/>
    <property type="evidence" value="ECO:0007669"/>
    <property type="project" value="TreeGrafter"/>
</dbReference>
<dbReference type="CDD" id="cd01734">
    <property type="entry name" value="YlxS_C"/>
    <property type="match status" value="1"/>
</dbReference>
<dbReference type="FunFam" id="3.30.300.70:FF:000001">
    <property type="entry name" value="Ribosome maturation factor RimP"/>
    <property type="match status" value="1"/>
</dbReference>
<dbReference type="Gene3D" id="2.30.30.180">
    <property type="entry name" value="Ribosome maturation factor RimP, C-terminal domain"/>
    <property type="match status" value="1"/>
</dbReference>
<dbReference type="Gene3D" id="3.30.300.70">
    <property type="entry name" value="RimP-like superfamily, N-terminal"/>
    <property type="match status" value="1"/>
</dbReference>
<dbReference type="HAMAP" id="MF_01077">
    <property type="entry name" value="RimP"/>
    <property type="match status" value="1"/>
</dbReference>
<dbReference type="InterPro" id="IPR003728">
    <property type="entry name" value="Ribosome_maturation_RimP"/>
</dbReference>
<dbReference type="InterPro" id="IPR028998">
    <property type="entry name" value="RimP_C"/>
</dbReference>
<dbReference type="InterPro" id="IPR036847">
    <property type="entry name" value="RimP_C_sf"/>
</dbReference>
<dbReference type="InterPro" id="IPR028989">
    <property type="entry name" value="RimP_N"/>
</dbReference>
<dbReference type="InterPro" id="IPR035956">
    <property type="entry name" value="RimP_N_sf"/>
</dbReference>
<dbReference type="NCBIfam" id="NF000928">
    <property type="entry name" value="PRK00092.1-2"/>
    <property type="match status" value="1"/>
</dbReference>
<dbReference type="PANTHER" id="PTHR33867">
    <property type="entry name" value="RIBOSOME MATURATION FACTOR RIMP"/>
    <property type="match status" value="1"/>
</dbReference>
<dbReference type="PANTHER" id="PTHR33867:SF1">
    <property type="entry name" value="RIBOSOME MATURATION FACTOR RIMP"/>
    <property type="match status" value="1"/>
</dbReference>
<dbReference type="Pfam" id="PF17384">
    <property type="entry name" value="DUF150_C"/>
    <property type="match status" value="1"/>
</dbReference>
<dbReference type="Pfam" id="PF02576">
    <property type="entry name" value="RimP_N"/>
    <property type="match status" value="1"/>
</dbReference>
<dbReference type="SUPFAM" id="SSF74942">
    <property type="entry name" value="YhbC-like, C-terminal domain"/>
    <property type="match status" value="1"/>
</dbReference>
<dbReference type="SUPFAM" id="SSF75420">
    <property type="entry name" value="YhbC-like, N-terminal domain"/>
    <property type="match status" value="1"/>
</dbReference>
<evidence type="ECO:0000255" key="1">
    <source>
        <dbReference type="HAMAP-Rule" id="MF_01077"/>
    </source>
</evidence>
<feature type="chain" id="PRO_0000181897" description="Ribosome maturation factor RimP">
    <location>
        <begin position="1"/>
        <end position="156"/>
    </location>
</feature>
<keyword id="KW-0963">Cytoplasm</keyword>
<keyword id="KW-1185">Reference proteome</keyword>
<keyword id="KW-0690">Ribosome biogenesis</keyword>
<proteinExistence type="inferred from homology"/>
<sequence>MSSHVVSLTEELVTPILEEKNLELVDIEYVKEGKNWFLRVYIDKEGGIDIMECGEVSELLSEKLDESDPITEAYFLEVSSPGVERPLKKKEDFDASIGKNIFVKLYEPIDGSKEYEGTLQSFDGETVTMEYKVKTRKKQVEIPYSKIAKARIAVTF</sequence>
<comment type="function">
    <text evidence="1">Required for maturation of 30S ribosomal subunits.</text>
</comment>
<comment type="subcellular location">
    <subcellularLocation>
        <location evidence="1">Cytoplasm</location>
    </subcellularLocation>
</comment>
<comment type="similarity">
    <text evidence="1">Belongs to the RimP family.</text>
</comment>
<reference key="1">
    <citation type="journal article" date="2002" name="Nucleic Acids Res.">
        <title>Genome sequence of Oceanobacillus iheyensis isolated from the Iheya Ridge and its unexpected adaptive capabilities to extreme environments.</title>
        <authorList>
            <person name="Takami H."/>
            <person name="Takaki Y."/>
            <person name="Uchiyama I."/>
        </authorList>
    </citation>
    <scope>NUCLEOTIDE SEQUENCE [LARGE SCALE GENOMIC DNA]</scope>
    <source>
        <strain>DSM 14371 / CIP 107618 / JCM 11309 / KCTC 3954 / HTE831</strain>
    </source>
</reference>
<organism>
    <name type="scientific">Oceanobacillus iheyensis (strain DSM 14371 / CIP 107618 / JCM 11309 / KCTC 3954 / HTE831)</name>
    <dbReference type="NCBI Taxonomy" id="221109"/>
    <lineage>
        <taxon>Bacteria</taxon>
        <taxon>Bacillati</taxon>
        <taxon>Bacillota</taxon>
        <taxon>Bacilli</taxon>
        <taxon>Bacillales</taxon>
        <taxon>Bacillaceae</taxon>
        <taxon>Oceanobacillus</taxon>
    </lineage>
</organism>